<organism>
    <name type="scientific">Secale cereale</name>
    <name type="common">Rye</name>
    <dbReference type="NCBI Taxonomy" id="4550"/>
    <lineage>
        <taxon>Eukaryota</taxon>
        <taxon>Viridiplantae</taxon>
        <taxon>Streptophyta</taxon>
        <taxon>Embryophyta</taxon>
        <taxon>Tracheophyta</taxon>
        <taxon>Spermatophyta</taxon>
        <taxon>Magnoliopsida</taxon>
        <taxon>Liliopsida</taxon>
        <taxon>Poales</taxon>
        <taxon>Poaceae</taxon>
        <taxon>BOP clade</taxon>
        <taxon>Pooideae</taxon>
        <taxon>Triticodae</taxon>
        <taxon>Triticeae</taxon>
        <taxon>Hordeinae</taxon>
        <taxon>Secale</taxon>
    </lineage>
</organism>
<reference key="1">
    <citation type="journal article" date="2000" name="Biochim. Biophys. Acta">
        <title>cDNA cloning of cytoplasmic ribosomal protein S7 of winter rye (Secale cereale) and its expression in low-temperature-treated leaves.</title>
        <authorList>
            <person name="Berberich T."/>
            <person name="Uebeler M."/>
            <person name="Feierabend J."/>
        </authorList>
    </citation>
    <scope>NUCLEOTIDE SEQUENCE [MRNA]</scope>
</reference>
<protein>
    <recommendedName>
        <fullName evidence="1">Small ribosomal subunit protein eS7</fullName>
    </recommendedName>
    <alternativeName>
        <fullName>40S ribosomal protein S7</fullName>
    </alternativeName>
</protein>
<dbReference type="EMBL" id="AF118149">
    <property type="protein sequence ID" value="AAD26256.1"/>
    <property type="molecule type" value="mRNA"/>
</dbReference>
<dbReference type="SMR" id="Q9XET4"/>
<dbReference type="EnsemblPlants" id="SECCE1Rv1G0018460.1">
    <property type="protein sequence ID" value="SECCE1Rv1G0018460.1"/>
    <property type="gene ID" value="SECCE1Rv1G0018460"/>
</dbReference>
<dbReference type="Gramene" id="SECCE1Rv1G0018460.1">
    <property type="protein sequence ID" value="SECCE1Rv1G0018460.1"/>
    <property type="gene ID" value="SECCE1Rv1G0018460"/>
</dbReference>
<dbReference type="GO" id="GO:0030686">
    <property type="term" value="C:90S preribosome"/>
    <property type="evidence" value="ECO:0007669"/>
    <property type="project" value="TreeGrafter"/>
</dbReference>
<dbReference type="GO" id="GO:0022627">
    <property type="term" value="C:cytosolic small ribosomal subunit"/>
    <property type="evidence" value="ECO:0007669"/>
    <property type="project" value="TreeGrafter"/>
</dbReference>
<dbReference type="GO" id="GO:0032040">
    <property type="term" value="C:small-subunit processome"/>
    <property type="evidence" value="ECO:0007669"/>
    <property type="project" value="TreeGrafter"/>
</dbReference>
<dbReference type="GO" id="GO:0003735">
    <property type="term" value="F:structural constituent of ribosome"/>
    <property type="evidence" value="ECO:0007669"/>
    <property type="project" value="InterPro"/>
</dbReference>
<dbReference type="GO" id="GO:0042274">
    <property type="term" value="P:ribosomal small subunit biogenesis"/>
    <property type="evidence" value="ECO:0007669"/>
    <property type="project" value="TreeGrafter"/>
</dbReference>
<dbReference type="GO" id="GO:0006364">
    <property type="term" value="P:rRNA processing"/>
    <property type="evidence" value="ECO:0007669"/>
    <property type="project" value="TreeGrafter"/>
</dbReference>
<dbReference type="GO" id="GO:0006412">
    <property type="term" value="P:translation"/>
    <property type="evidence" value="ECO:0007669"/>
    <property type="project" value="InterPro"/>
</dbReference>
<dbReference type="InterPro" id="IPR000554">
    <property type="entry name" value="Ribosomal_eS7"/>
</dbReference>
<dbReference type="InterPro" id="IPR047861">
    <property type="entry name" value="Ribosomal_eS7_CS"/>
</dbReference>
<dbReference type="PANTHER" id="PTHR11278">
    <property type="entry name" value="40S RIBOSOMAL PROTEIN S7"/>
    <property type="match status" value="1"/>
</dbReference>
<dbReference type="PANTHER" id="PTHR11278:SF0">
    <property type="entry name" value="SMALL RIBOSOMAL SUBUNIT PROTEIN ES7"/>
    <property type="match status" value="1"/>
</dbReference>
<dbReference type="Pfam" id="PF01251">
    <property type="entry name" value="Ribosomal_S7e"/>
    <property type="match status" value="1"/>
</dbReference>
<dbReference type="PROSITE" id="PS00948">
    <property type="entry name" value="RIBOSOMAL_S7E"/>
    <property type="match status" value="1"/>
</dbReference>
<keyword id="KW-0687">Ribonucleoprotein</keyword>
<keyword id="KW-0689">Ribosomal protein</keyword>
<accession>Q9XET4</accession>
<proteinExistence type="evidence at transcript level"/>
<feature type="chain" id="PRO_0000174209" description="Small ribosomal subunit protein eS7">
    <location>
        <begin position="1"/>
        <end position="192"/>
    </location>
</feature>
<name>RS7_SECCE</name>
<gene>
    <name type="primary">RPS7</name>
</gene>
<evidence type="ECO:0000305" key="1"/>
<sequence length="192" mass="22189">MYTARKKIQKDKGLEPSEFEDTVAQAFFDLENGNQELKSDVKDLYINAAFQMDVAGNRKAVVIHVPYRLRKNFRKIHVRLVRELEKKFSGKDVVIVATRRIVRPPKKGSAVVRPRTRTLTAVHDGLLEDVVYPAEIVGKRVRYRLDGSKIIKIFLDPMERNNTEYKLDTFTAVYRRLCGKDVVYEYPVAETA</sequence>
<comment type="similarity">
    <text evidence="1">Belongs to the eukaryotic ribosomal protein eS7 family.</text>
</comment>